<gene>
    <name evidence="1" type="primary">rpsT</name>
    <name type="ordered locus">SAOUHSC_01689</name>
</gene>
<comment type="function">
    <text evidence="1">Binds directly to 16S ribosomal RNA.</text>
</comment>
<comment type="similarity">
    <text evidence="1">Belongs to the bacterial ribosomal protein bS20 family.</text>
</comment>
<sequence length="83" mass="9021">MANIKSAIKRVKTTEKAEARNISQKSAMRTAVKNAKTAVSNNADNKNELVSLAVKLVDKAAQSNLIHSNKADRIKSQLMTANK</sequence>
<feature type="chain" id="PRO_0000260145" description="Small ribosomal subunit protein bS20">
    <location>
        <begin position="1"/>
        <end position="83"/>
    </location>
</feature>
<feature type="helix" evidence="3">
    <location>
        <begin position="7"/>
        <end position="37"/>
    </location>
</feature>
<feature type="turn" evidence="3">
    <location>
        <begin position="38"/>
        <end position="40"/>
    </location>
</feature>
<feature type="helix" evidence="3">
    <location>
        <begin position="47"/>
        <end position="62"/>
    </location>
</feature>
<feature type="helix" evidence="3">
    <location>
        <begin position="68"/>
        <end position="79"/>
    </location>
</feature>
<keyword id="KW-0002">3D-structure</keyword>
<keyword id="KW-1185">Reference proteome</keyword>
<keyword id="KW-0687">Ribonucleoprotein</keyword>
<keyword id="KW-0689">Ribosomal protein</keyword>
<keyword id="KW-0694">RNA-binding</keyword>
<keyword id="KW-0699">rRNA-binding</keyword>
<name>RS20_STAA8</name>
<accession>Q2FXY6</accession>
<evidence type="ECO:0000255" key="1">
    <source>
        <dbReference type="HAMAP-Rule" id="MF_00500"/>
    </source>
</evidence>
<evidence type="ECO:0000305" key="2"/>
<evidence type="ECO:0007829" key="3">
    <source>
        <dbReference type="PDB" id="8BYV"/>
    </source>
</evidence>
<organism>
    <name type="scientific">Staphylococcus aureus (strain NCTC 8325 / PS 47)</name>
    <dbReference type="NCBI Taxonomy" id="93061"/>
    <lineage>
        <taxon>Bacteria</taxon>
        <taxon>Bacillati</taxon>
        <taxon>Bacillota</taxon>
        <taxon>Bacilli</taxon>
        <taxon>Bacillales</taxon>
        <taxon>Staphylococcaceae</taxon>
        <taxon>Staphylococcus</taxon>
    </lineage>
</organism>
<dbReference type="EMBL" id="CP000253">
    <property type="protein sequence ID" value="ABD30763.1"/>
    <property type="molecule type" value="Genomic_DNA"/>
</dbReference>
<dbReference type="RefSeq" id="WP_001274017.1">
    <property type="nucleotide sequence ID" value="NZ_LS483365.1"/>
</dbReference>
<dbReference type="RefSeq" id="YP_500199.1">
    <property type="nucleotide sequence ID" value="NC_007795.1"/>
</dbReference>
<dbReference type="PDB" id="5LI0">
    <property type="method" value="EM"/>
    <property type="resolution" value="3.80 A"/>
    <property type="chains" value="t=3-82"/>
</dbReference>
<dbReference type="PDB" id="5ND8">
    <property type="method" value="EM"/>
    <property type="resolution" value="3.70 A"/>
    <property type="chains" value="t=1-83"/>
</dbReference>
<dbReference type="PDB" id="5ND9">
    <property type="method" value="EM"/>
    <property type="resolution" value="3.70 A"/>
    <property type="chains" value="t=1-83"/>
</dbReference>
<dbReference type="PDB" id="5TCU">
    <property type="method" value="EM"/>
    <property type="resolution" value="3.90 A"/>
    <property type="chains" value="SA=5-83"/>
</dbReference>
<dbReference type="PDB" id="6YEF">
    <property type="method" value="EM"/>
    <property type="resolution" value="3.20 A"/>
    <property type="chains" value="t=1-83"/>
</dbReference>
<dbReference type="PDB" id="7BGD">
    <property type="method" value="EM"/>
    <property type="resolution" value="3.20 A"/>
    <property type="chains" value="t=1-83"/>
</dbReference>
<dbReference type="PDB" id="7KWG">
    <property type="method" value="EM"/>
    <property type="resolution" value="3.75 A"/>
    <property type="chains" value="t=1-83"/>
</dbReference>
<dbReference type="PDB" id="7NHL">
    <property type="method" value="EM"/>
    <property type="resolution" value="3.10 A"/>
    <property type="chains" value="u=1-83"/>
</dbReference>
<dbReference type="PDB" id="7NHM">
    <property type="method" value="EM"/>
    <property type="resolution" value="3.10 A"/>
    <property type="chains" value="u=1-83"/>
</dbReference>
<dbReference type="PDB" id="8BH6">
    <property type="method" value="EM"/>
    <property type="resolution" value="3.70 A"/>
    <property type="chains" value="t=1-83"/>
</dbReference>
<dbReference type="PDB" id="8BH7">
    <property type="method" value="EM"/>
    <property type="resolution" value="4.23 A"/>
    <property type="chains" value="t=1-83"/>
</dbReference>
<dbReference type="PDB" id="8BYV">
    <property type="method" value="EM"/>
    <property type="resolution" value="2.89 A"/>
    <property type="chains" value="t=1-83"/>
</dbReference>
<dbReference type="PDB" id="8P2F">
    <property type="method" value="EM"/>
    <property type="resolution" value="2.44 A"/>
    <property type="chains" value="u=1-83"/>
</dbReference>
<dbReference type="PDB" id="8P2G">
    <property type="method" value="EM"/>
    <property type="resolution" value="2.02 A"/>
    <property type="chains" value="u=1-83"/>
</dbReference>
<dbReference type="PDB" id="8P2H">
    <property type="method" value="EM"/>
    <property type="resolution" value="2.49 A"/>
    <property type="chains" value="u=1-83"/>
</dbReference>
<dbReference type="PDBsum" id="5LI0"/>
<dbReference type="PDBsum" id="5ND8"/>
<dbReference type="PDBsum" id="5ND9"/>
<dbReference type="PDBsum" id="5TCU"/>
<dbReference type="PDBsum" id="6YEF"/>
<dbReference type="PDBsum" id="7BGD"/>
<dbReference type="PDBsum" id="7KWG"/>
<dbReference type="PDBsum" id="7NHL"/>
<dbReference type="PDBsum" id="7NHM"/>
<dbReference type="PDBsum" id="8BH6"/>
<dbReference type="PDBsum" id="8BH7"/>
<dbReference type="PDBsum" id="8BYV"/>
<dbReference type="PDBsum" id="8P2F"/>
<dbReference type="PDBsum" id="8P2G"/>
<dbReference type="PDBsum" id="8P2H"/>
<dbReference type="EMDB" id="EMD-10791"/>
<dbReference type="EMDB" id="EMD-12178"/>
<dbReference type="EMDB" id="EMD-12332"/>
<dbReference type="EMDB" id="EMD-12333"/>
<dbReference type="EMDB" id="EMD-16048"/>
<dbReference type="EMDB" id="EMD-16049"/>
<dbReference type="EMDB" id="EMD-16334"/>
<dbReference type="EMDB" id="EMD-17363"/>
<dbReference type="EMDB" id="EMD-17364"/>
<dbReference type="EMDB" id="EMD-17365"/>
<dbReference type="EMDB" id="EMD-23052"/>
<dbReference type="EMDB" id="EMD-3624"/>
<dbReference type="EMDB" id="EMD-3625"/>
<dbReference type="EMDB" id="EMD-4050"/>
<dbReference type="EMDB" id="EMD-8402"/>
<dbReference type="SMR" id="Q2FXY6"/>
<dbReference type="IntAct" id="Q2FXY6">
    <property type="interactions" value="1"/>
</dbReference>
<dbReference type="STRING" id="93061.SAOUHSC_01689"/>
<dbReference type="PaxDb" id="1280-SAXN108_1611"/>
<dbReference type="GeneID" id="3921801"/>
<dbReference type="GeneID" id="66839775"/>
<dbReference type="KEGG" id="sao:SAOUHSC_01689"/>
<dbReference type="PATRIC" id="fig|93061.5.peg.1538"/>
<dbReference type="eggNOG" id="COG0268">
    <property type="taxonomic scope" value="Bacteria"/>
</dbReference>
<dbReference type="HOGENOM" id="CLU_160655_1_1_9"/>
<dbReference type="OrthoDB" id="9808392at2"/>
<dbReference type="PRO" id="PR:Q2FXY6"/>
<dbReference type="Proteomes" id="UP000008816">
    <property type="component" value="Chromosome"/>
</dbReference>
<dbReference type="GO" id="GO:0005829">
    <property type="term" value="C:cytosol"/>
    <property type="evidence" value="ECO:0000318"/>
    <property type="project" value="GO_Central"/>
</dbReference>
<dbReference type="GO" id="GO:0015935">
    <property type="term" value="C:small ribosomal subunit"/>
    <property type="evidence" value="ECO:0000318"/>
    <property type="project" value="GO_Central"/>
</dbReference>
<dbReference type="GO" id="GO:0070181">
    <property type="term" value="F:small ribosomal subunit rRNA binding"/>
    <property type="evidence" value="ECO:0000318"/>
    <property type="project" value="GO_Central"/>
</dbReference>
<dbReference type="GO" id="GO:0003735">
    <property type="term" value="F:structural constituent of ribosome"/>
    <property type="evidence" value="ECO:0007669"/>
    <property type="project" value="InterPro"/>
</dbReference>
<dbReference type="GO" id="GO:0006412">
    <property type="term" value="P:translation"/>
    <property type="evidence" value="ECO:0007669"/>
    <property type="project" value="UniProtKB-UniRule"/>
</dbReference>
<dbReference type="Gene3D" id="1.20.58.110">
    <property type="entry name" value="Ribosomal protein S20"/>
    <property type="match status" value="1"/>
</dbReference>
<dbReference type="HAMAP" id="MF_00500">
    <property type="entry name" value="Ribosomal_bS20"/>
    <property type="match status" value="1"/>
</dbReference>
<dbReference type="InterPro" id="IPR002583">
    <property type="entry name" value="Ribosomal_bS20"/>
</dbReference>
<dbReference type="InterPro" id="IPR036510">
    <property type="entry name" value="Ribosomal_bS20_sf"/>
</dbReference>
<dbReference type="NCBIfam" id="TIGR00029">
    <property type="entry name" value="S20"/>
    <property type="match status" value="1"/>
</dbReference>
<dbReference type="PANTHER" id="PTHR33398">
    <property type="entry name" value="30S RIBOSOMAL PROTEIN S20"/>
    <property type="match status" value="1"/>
</dbReference>
<dbReference type="PANTHER" id="PTHR33398:SF1">
    <property type="entry name" value="SMALL RIBOSOMAL SUBUNIT PROTEIN BS20C"/>
    <property type="match status" value="1"/>
</dbReference>
<dbReference type="Pfam" id="PF01649">
    <property type="entry name" value="Ribosomal_S20p"/>
    <property type="match status" value="1"/>
</dbReference>
<dbReference type="SUPFAM" id="SSF46992">
    <property type="entry name" value="Ribosomal protein S20"/>
    <property type="match status" value="1"/>
</dbReference>
<proteinExistence type="evidence at protein level"/>
<protein>
    <recommendedName>
        <fullName evidence="1">Small ribosomal subunit protein bS20</fullName>
    </recommendedName>
    <alternativeName>
        <fullName evidence="2">30S ribosomal protein S20</fullName>
    </alternativeName>
</protein>
<reference key="1">
    <citation type="book" date="2006" name="Gram positive pathogens, 2nd edition">
        <title>The Staphylococcus aureus NCTC 8325 genome.</title>
        <editorList>
            <person name="Fischetti V."/>
            <person name="Novick R."/>
            <person name="Ferretti J."/>
            <person name="Portnoy D."/>
            <person name="Rood J."/>
        </editorList>
        <authorList>
            <person name="Gillaspy A.F."/>
            <person name="Worrell V."/>
            <person name="Orvis J."/>
            <person name="Roe B.A."/>
            <person name="Dyer D.W."/>
            <person name="Iandolo J.J."/>
        </authorList>
    </citation>
    <scope>NUCLEOTIDE SEQUENCE [LARGE SCALE GENOMIC DNA]</scope>
    <source>
        <strain>NCTC 8325 / PS 47</strain>
    </source>
</reference>